<sequence length="273" mass="29449">MKKYLLGIGLILALIACKQNVSSLDEKNSVSVDLPGEMKVLVSKEKDKDGKYSLMATVDKLELKGTSDKNNGSGVLEGVKADKSKVKLTVSDDLSTTTLEVLKEDGKTLVSKKRTSKDKSSTEEKFNEKGELVEKIMARANGTILEYTGIKSDGSGKAKETLKEYVLEGTLTAEKATLVVKEGTVTLSKHISKSGEVTAELNDTDSTQATKKTGKWDAGTSTLTITVNNKKTKALVFTKQDTITSQKYDSAGTNLEGTAVEIKTLDELKNALR</sequence>
<name>OSPA_BORBG</name>
<accession>Q09087</accession>
<proteinExistence type="inferred from homology"/>
<protein>
    <recommendedName>
        <fullName evidence="2">Outer surface protein A</fullName>
    </recommendedName>
</protein>
<gene>
    <name evidence="2" type="primary">ospA</name>
</gene>
<dbReference type="EMBL" id="AF230516">
    <property type="protein sequence ID" value="AAB21761.1"/>
    <property type="molecule type" value="Genomic_DNA"/>
</dbReference>
<dbReference type="EMBL" id="U65802">
    <property type="protein sequence ID" value="AAB39577.1"/>
    <property type="molecule type" value="Genomic_DNA"/>
</dbReference>
<dbReference type="PIR" id="A46460">
    <property type="entry name" value="A46460"/>
</dbReference>
<dbReference type="SMR" id="Q09087"/>
<dbReference type="GO" id="GO:0009279">
    <property type="term" value="C:cell outer membrane"/>
    <property type="evidence" value="ECO:0007669"/>
    <property type="project" value="UniProtKB-SubCell"/>
</dbReference>
<dbReference type="GO" id="GO:0009986">
    <property type="term" value="C:cell surface"/>
    <property type="evidence" value="ECO:0007669"/>
    <property type="project" value="UniProtKB-SubCell"/>
</dbReference>
<dbReference type="FunFam" id="2.40.128.160:FF:000001">
    <property type="entry name" value="Outer surface protein A"/>
    <property type="match status" value="1"/>
</dbReference>
<dbReference type="Gene3D" id="3.90.930.1">
    <property type="match status" value="1"/>
</dbReference>
<dbReference type="Gene3D" id="2.40.128.160">
    <property type="entry name" value="C1 set domains (antibody constant domain-like)"/>
    <property type="match status" value="1"/>
</dbReference>
<dbReference type="InterPro" id="IPR001809">
    <property type="entry name" value="OM_lipoprot_Borrelia"/>
</dbReference>
<dbReference type="InterPro" id="IPR023322">
    <property type="entry name" value="OM_lipoprot_dom_sf"/>
</dbReference>
<dbReference type="Pfam" id="PF00820">
    <property type="entry name" value="Lipoprotein_1"/>
    <property type="match status" value="1"/>
</dbReference>
<dbReference type="PRINTS" id="PR00968">
    <property type="entry name" value="OUTRSURFACE"/>
</dbReference>
<dbReference type="SUPFAM" id="SSF51087">
    <property type="entry name" value="Outer surface protein"/>
    <property type="match status" value="1"/>
</dbReference>
<dbReference type="PROSITE" id="PS51257">
    <property type="entry name" value="PROKAR_LIPOPROTEIN"/>
    <property type="match status" value="1"/>
</dbReference>
<keyword id="KW-0998">Cell outer membrane</keyword>
<keyword id="KW-0449">Lipoprotein</keyword>
<keyword id="KW-0472">Membrane</keyword>
<keyword id="KW-0564">Palmitate</keyword>
<keyword id="KW-0614">Plasmid</keyword>
<keyword id="KW-0732">Signal</keyword>
<geneLocation type="plasmid">
    <name>lp54</name>
</geneLocation>
<organism>
    <name type="scientific">Borreliella burgdorferi</name>
    <name type="common">Lyme disease spirochete</name>
    <name type="synonym">Borrelia burgdorferi</name>
    <dbReference type="NCBI Taxonomy" id="139"/>
    <lineage>
        <taxon>Bacteria</taxon>
        <taxon>Pseudomonadati</taxon>
        <taxon>Spirochaetota</taxon>
        <taxon>Spirochaetia</taxon>
        <taxon>Spirochaetales</taxon>
        <taxon>Borreliaceae</taxon>
        <taxon>Borreliella</taxon>
    </lineage>
</organism>
<reference evidence="5" key="1">
    <citation type="journal article" date="1992" name="J. Immunol.">
        <title>Borrelia burgdorferi strain 25015: characterization of outer surface protein A and vaccination against infection.</title>
        <authorList>
            <person name="Fikrig E."/>
            <person name="Barthold S.W."/>
            <person name="Persing D.H."/>
            <person name="Sun X."/>
            <person name="Kantor F.S."/>
            <person name="Flavell R.A."/>
        </authorList>
    </citation>
    <scope>NUCLEOTIDE SEQUENCE [GENOMIC DNA]</scope>
    <source>
        <strain>25015</strain>
    </source>
</reference>
<reference evidence="6" key="2">
    <citation type="submission" date="1997-01" db="EMBL/GenBank/DDBJ databases">
        <authorList>
            <person name="Mathiesen D.A."/>
            <person name="Oliver J.H. Jr."/>
            <person name="Kolbert C.P."/>
            <person name="Tullson E.D."/>
            <person name="Johnson B.J.B."/>
            <person name="Campbell G.L."/>
            <person name="Mitchell P.D."/>
            <person name="Reed K.D."/>
            <person name="Anderson J.F."/>
            <person name="Lane R.S."/>
            <person name="Persing D.H."/>
        </authorList>
    </citation>
    <scope>NUCLEOTIDE SEQUENCE [GENOMIC DNA] OF 15-96</scope>
    <source>
        <strain>25015</strain>
    </source>
</reference>
<evidence type="ECO:0000255" key="1">
    <source>
        <dbReference type="PROSITE-ProRule" id="PRU00303"/>
    </source>
</evidence>
<evidence type="ECO:0000303" key="2">
    <source>
    </source>
</evidence>
<evidence type="ECO:0000305" key="3"/>
<evidence type="ECO:0000305" key="4">
    <source>
    </source>
</evidence>
<evidence type="ECO:0000312" key="5">
    <source>
        <dbReference type="EMBL" id="AAB21761.1"/>
    </source>
</evidence>
<evidence type="ECO:0000312" key="6">
    <source>
        <dbReference type="EMBL" id="AAB39577.1"/>
    </source>
</evidence>
<feature type="signal peptide" evidence="1">
    <location>
        <begin position="1"/>
        <end position="16"/>
    </location>
</feature>
<feature type="chain" id="PRO_0000018075" description="Outer surface protein A" evidence="1">
    <location>
        <begin position="17"/>
        <end position="273"/>
    </location>
</feature>
<feature type="lipid moiety-binding region" description="N-palmitoyl cysteine" evidence="1">
    <location>
        <position position="17"/>
    </location>
</feature>
<feature type="lipid moiety-binding region" description="S-diacylglycerol cysteine" evidence="1">
    <location>
        <position position="17"/>
    </location>
</feature>
<comment type="subcellular location">
    <subcellularLocation>
        <location evidence="4">Cell outer membrane</location>
        <topology evidence="1">Lipid-anchor</topology>
    </subcellularLocation>
    <subcellularLocation>
        <location evidence="4">Cell surface</location>
    </subcellularLocation>
</comment>
<comment type="similarity">
    <text evidence="3">Belongs to the OspA lipoprotein family.</text>
</comment>